<accession>Q867W1</accession>
<keyword id="KW-0027">Amidation</keyword>
<keyword id="KW-0165">Cleavage on pair of basic residues</keyword>
<keyword id="KW-0903">Direct protein sequencing</keyword>
<keyword id="KW-0527">Neuropeptide</keyword>
<keyword id="KW-0964">Secreted</keyword>
<keyword id="KW-0732">Signal</keyword>
<organism>
    <name type="scientific">Procambarus clarkii</name>
    <name type="common">Red swamp crayfish</name>
    <dbReference type="NCBI Taxonomy" id="6728"/>
    <lineage>
        <taxon>Eukaryota</taxon>
        <taxon>Metazoa</taxon>
        <taxon>Ecdysozoa</taxon>
        <taxon>Arthropoda</taxon>
        <taxon>Crustacea</taxon>
        <taxon>Multicrustacea</taxon>
        <taxon>Malacostraca</taxon>
        <taxon>Eumalacostraca</taxon>
        <taxon>Eucarida</taxon>
        <taxon>Decapoda</taxon>
        <taxon>Pleocyemata</taxon>
        <taxon>Astacidea</taxon>
        <taxon>Astacoidea</taxon>
        <taxon>Cambaridae</taxon>
        <taxon>Procambarus</taxon>
    </lineage>
</organism>
<protein>
    <recommendedName>
        <fullName>FMRFamide-related neuropeptides</fullName>
    </recommendedName>
    <component>
        <recommendedName>
            <fullName>GYRKPPFNGSIF-amide</fullName>
            <shortName>SIFamide</shortName>
        </recommendedName>
    </component>
    <component>
        <recommendedName>
            <fullName>C-terminal peptide</fullName>
        </recommendedName>
    </component>
</protein>
<sequence>MCVQTRMLVAVAVVLVVLAVLSDPVSAGYRKPPFNGSIFGKRAGGDSLYEPGKALASACQVAVEACAAWFPGPEKK</sequence>
<proteinExistence type="evidence at protein level"/>
<feature type="signal peptide" evidence="2">
    <location>
        <begin position="1"/>
        <end position="27"/>
    </location>
</feature>
<feature type="peptide" id="PRO_0000253935" description="GYRKPPFNGSIF-amide" evidence="2">
    <location>
        <begin position="28"/>
        <end position="39"/>
    </location>
</feature>
<feature type="peptide" id="PRO_0000253936" description="C-terminal peptide" evidence="1 3">
    <location>
        <begin position="43"/>
        <end position="74"/>
    </location>
</feature>
<feature type="modified residue" description="Phenylalanine amide" evidence="2">
    <location>
        <position position="39"/>
    </location>
</feature>
<name>FRP1_PROCL</name>
<reference evidence="4 5" key="1">
    <citation type="journal article" date="2004" name="Gen. Comp. Endocrinol.">
        <title>Identification of GYRKPPFNGSIFamide (crustacean-SIFamide) in the crayfish Procambarus clarkii by topological mass spectrometry analysis.</title>
        <authorList>
            <person name="Yasuda A."/>
            <person name="Yasuda-Kamatani Y."/>
            <person name="Nozaki M."/>
            <person name="Nakajima T."/>
        </authorList>
    </citation>
    <scope>NUCLEOTIDE SEQUENCE [MRNA]</scope>
    <scope>PROTEIN SEQUENCE OF 28-39</scope>
    <scope>AMIDATION AT PHE-39</scope>
    <scope>FUNCTION</scope>
    <scope>TISSUE SPECIFICITY</scope>
    <scope>IDENTIFICATION BY MASS SPECTROMETRY</scope>
</reference>
<comment type="function">
    <text evidence="2">GYRKPPFNGSIF-amide may be involved in olfaction and contraction of hindgut.</text>
</comment>
<comment type="subcellular location">
    <subcellularLocation>
        <location>Secreted</location>
    </subcellularLocation>
</comment>
<comment type="tissue specificity">
    <text evidence="2">Olfactory lobe and accessory lobe, olfactory globular tract, olfactory lobe cells (at protein level). Widely distributed throughout nervous system.</text>
</comment>
<comment type="mass spectrometry">
    <molecule>GYRKPPFNGSIF-amide</molecule>
</comment>
<comment type="similarity">
    <text evidence="1">Belongs to the FARP (FMRFamide related peptide) family.</text>
</comment>
<evidence type="ECO:0000255" key="1"/>
<evidence type="ECO:0000269" key="2">
    <source>
    </source>
</evidence>
<evidence type="ECO:0000303" key="3">
    <source>
    </source>
</evidence>
<evidence type="ECO:0000305" key="4"/>
<evidence type="ECO:0000312" key="5">
    <source>
        <dbReference type="EMBL" id="BAC55939.1"/>
    </source>
</evidence>
<dbReference type="EMBL" id="AB036712">
    <property type="protein sequence ID" value="BAC55939.1"/>
    <property type="molecule type" value="mRNA"/>
</dbReference>
<dbReference type="EMBL" id="AB036713">
    <property type="protein sequence ID" value="BAC55940.1"/>
    <property type="molecule type" value="mRNA"/>
</dbReference>
<dbReference type="EnsemblMetazoa" id="XM_045730727.1">
    <property type="protein sequence ID" value="XP_045586683.1"/>
    <property type="gene ID" value="LOC123748560"/>
</dbReference>
<dbReference type="OrthoDB" id="8190180at2759"/>
<dbReference type="GO" id="GO:0005576">
    <property type="term" value="C:extracellular region"/>
    <property type="evidence" value="ECO:0007669"/>
    <property type="project" value="UniProtKB-SubCell"/>
</dbReference>
<dbReference type="GO" id="GO:0007218">
    <property type="term" value="P:neuropeptide signaling pathway"/>
    <property type="evidence" value="ECO:0007669"/>
    <property type="project" value="UniProtKB-KW"/>
</dbReference>